<reference key="1">
    <citation type="journal article" date="2006" name="Proc. Natl. Acad. Sci. U.S.A.">
        <title>Comparative genomics of the lactic acid bacteria.</title>
        <authorList>
            <person name="Makarova K.S."/>
            <person name="Slesarev A."/>
            <person name="Wolf Y.I."/>
            <person name="Sorokin A."/>
            <person name="Mirkin B."/>
            <person name="Koonin E.V."/>
            <person name="Pavlov A."/>
            <person name="Pavlova N."/>
            <person name="Karamychev V."/>
            <person name="Polouchine N."/>
            <person name="Shakhova V."/>
            <person name="Grigoriev I."/>
            <person name="Lou Y."/>
            <person name="Rohksar D."/>
            <person name="Lucas S."/>
            <person name="Huang K."/>
            <person name="Goodstein D.M."/>
            <person name="Hawkins T."/>
            <person name="Plengvidhya V."/>
            <person name="Welker D."/>
            <person name="Hughes J."/>
            <person name="Goh Y."/>
            <person name="Benson A."/>
            <person name="Baldwin K."/>
            <person name="Lee J.-H."/>
            <person name="Diaz-Muniz I."/>
            <person name="Dosti B."/>
            <person name="Smeianov V."/>
            <person name="Wechter W."/>
            <person name="Barabote R."/>
            <person name="Lorca G."/>
            <person name="Altermann E."/>
            <person name="Barrangou R."/>
            <person name="Ganesan B."/>
            <person name="Xie Y."/>
            <person name="Rawsthorne H."/>
            <person name="Tamir D."/>
            <person name="Parker C."/>
            <person name="Breidt F."/>
            <person name="Broadbent J.R."/>
            <person name="Hutkins R."/>
            <person name="O'Sullivan D."/>
            <person name="Steele J."/>
            <person name="Unlu G."/>
            <person name="Saier M.H. Jr."/>
            <person name="Klaenhammer T."/>
            <person name="Richardson P."/>
            <person name="Kozyavkin S."/>
            <person name="Weimer B.C."/>
            <person name="Mills D.A."/>
        </authorList>
    </citation>
    <scope>NUCLEOTIDE SEQUENCE [LARGE SCALE GENOMIC DNA]</scope>
    <source>
        <strain>ATCC BAA-491 / LMD-9</strain>
    </source>
</reference>
<proteinExistence type="inferred from homology"/>
<sequence length="308" mass="34560">MAIADGKVSLKHLVTMETLTNEEVLGMIRRGGDFKNGRADFQLDRQYFAANLFFENSTRTHKSFEVAEKKLGLDVIEFDAGTSSVNKGETLYDTILTMSALGVDICVVRHSEVDYYKQLIDSRTIQTSIVNGGDGSGQHPSQCLLDLMTIYEEFGTFGNLKICIAGDITHSRVAKSNMRILKRLGAQIYFAGPTEWYSSEFDVYGQHVAIDDVIEDLNVLMLLRVQHERHRNDKGFSKEEYHTLYGLTEERYAKLADQAIIMHPAPVNRDVEIADSLVEAPKARIVTQMQNGVFVRMAIIEAILNGKA</sequence>
<dbReference type="EC" id="2.1.3.2" evidence="1"/>
<dbReference type="EMBL" id="CP000419">
    <property type="protein sequence ID" value="ABJ65832.1"/>
    <property type="molecule type" value="Genomic_DNA"/>
</dbReference>
<dbReference type="RefSeq" id="WP_002947266.1">
    <property type="nucleotide sequence ID" value="NZ_CP086001.1"/>
</dbReference>
<dbReference type="SMR" id="Q03LU0"/>
<dbReference type="KEGG" id="ste:STER_0557"/>
<dbReference type="HOGENOM" id="CLU_043846_2_1_9"/>
<dbReference type="UniPathway" id="UPA00070">
    <property type="reaction ID" value="UER00116"/>
</dbReference>
<dbReference type="GO" id="GO:0005829">
    <property type="term" value="C:cytosol"/>
    <property type="evidence" value="ECO:0007669"/>
    <property type="project" value="TreeGrafter"/>
</dbReference>
<dbReference type="GO" id="GO:0016597">
    <property type="term" value="F:amino acid binding"/>
    <property type="evidence" value="ECO:0007669"/>
    <property type="project" value="InterPro"/>
</dbReference>
<dbReference type="GO" id="GO:0004070">
    <property type="term" value="F:aspartate carbamoyltransferase activity"/>
    <property type="evidence" value="ECO:0007669"/>
    <property type="project" value="UniProtKB-UniRule"/>
</dbReference>
<dbReference type="GO" id="GO:0006207">
    <property type="term" value="P:'de novo' pyrimidine nucleobase biosynthetic process"/>
    <property type="evidence" value="ECO:0007669"/>
    <property type="project" value="InterPro"/>
</dbReference>
<dbReference type="GO" id="GO:0044205">
    <property type="term" value="P:'de novo' UMP biosynthetic process"/>
    <property type="evidence" value="ECO:0007669"/>
    <property type="project" value="UniProtKB-UniRule"/>
</dbReference>
<dbReference type="GO" id="GO:0006520">
    <property type="term" value="P:amino acid metabolic process"/>
    <property type="evidence" value="ECO:0007669"/>
    <property type="project" value="InterPro"/>
</dbReference>
<dbReference type="FunFam" id="3.40.50.1370:FF:000011">
    <property type="entry name" value="Aspartate carbamoyltransferase"/>
    <property type="match status" value="1"/>
</dbReference>
<dbReference type="Gene3D" id="3.40.50.1370">
    <property type="entry name" value="Aspartate/ornithine carbamoyltransferase"/>
    <property type="match status" value="2"/>
</dbReference>
<dbReference type="HAMAP" id="MF_00001">
    <property type="entry name" value="Asp_carb_tr"/>
    <property type="match status" value="1"/>
</dbReference>
<dbReference type="InterPro" id="IPR006132">
    <property type="entry name" value="Asp/Orn_carbamoyltranf_P-bd"/>
</dbReference>
<dbReference type="InterPro" id="IPR006130">
    <property type="entry name" value="Asp/Orn_carbamoylTrfase"/>
</dbReference>
<dbReference type="InterPro" id="IPR036901">
    <property type="entry name" value="Asp/Orn_carbamoylTrfase_sf"/>
</dbReference>
<dbReference type="InterPro" id="IPR002082">
    <property type="entry name" value="Asp_carbamoyltransf"/>
</dbReference>
<dbReference type="InterPro" id="IPR006131">
    <property type="entry name" value="Asp_carbamoyltransf_Asp/Orn-bd"/>
</dbReference>
<dbReference type="NCBIfam" id="TIGR00670">
    <property type="entry name" value="asp_carb_tr"/>
    <property type="match status" value="1"/>
</dbReference>
<dbReference type="NCBIfam" id="NF002032">
    <property type="entry name" value="PRK00856.1"/>
    <property type="match status" value="1"/>
</dbReference>
<dbReference type="PANTHER" id="PTHR45753:SF6">
    <property type="entry name" value="ASPARTATE CARBAMOYLTRANSFERASE"/>
    <property type="match status" value="1"/>
</dbReference>
<dbReference type="PANTHER" id="PTHR45753">
    <property type="entry name" value="ORNITHINE CARBAMOYLTRANSFERASE, MITOCHONDRIAL"/>
    <property type="match status" value="1"/>
</dbReference>
<dbReference type="Pfam" id="PF00185">
    <property type="entry name" value="OTCace"/>
    <property type="match status" value="1"/>
</dbReference>
<dbReference type="Pfam" id="PF02729">
    <property type="entry name" value="OTCace_N"/>
    <property type="match status" value="1"/>
</dbReference>
<dbReference type="PRINTS" id="PR00100">
    <property type="entry name" value="AOTCASE"/>
</dbReference>
<dbReference type="PRINTS" id="PR00101">
    <property type="entry name" value="ATCASE"/>
</dbReference>
<dbReference type="SUPFAM" id="SSF53671">
    <property type="entry name" value="Aspartate/ornithine carbamoyltransferase"/>
    <property type="match status" value="1"/>
</dbReference>
<dbReference type="PROSITE" id="PS00097">
    <property type="entry name" value="CARBAMOYLTRANSFERASE"/>
    <property type="match status" value="1"/>
</dbReference>
<gene>
    <name evidence="1" type="primary">pyrB</name>
    <name type="ordered locus">STER_0557</name>
</gene>
<feature type="chain" id="PRO_0000301631" description="Aspartate carbamoyltransferase catalytic subunit">
    <location>
        <begin position="1"/>
        <end position="308"/>
    </location>
</feature>
<feature type="binding site" evidence="1">
    <location>
        <position position="59"/>
    </location>
    <ligand>
        <name>carbamoyl phosphate</name>
        <dbReference type="ChEBI" id="CHEBI:58228"/>
    </ligand>
</feature>
<feature type="binding site" evidence="1">
    <location>
        <position position="60"/>
    </location>
    <ligand>
        <name>carbamoyl phosphate</name>
        <dbReference type="ChEBI" id="CHEBI:58228"/>
    </ligand>
</feature>
<feature type="binding site" evidence="1">
    <location>
        <position position="87"/>
    </location>
    <ligand>
        <name>L-aspartate</name>
        <dbReference type="ChEBI" id="CHEBI:29991"/>
    </ligand>
</feature>
<feature type="binding site" evidence="1">
    <location>
        <position position="109"/>
    </location>
    <ligand>
        <name>carbamoyl phosphate</name>
        <dbReference type="ChEBI" id="CHEBI:58228"/>
    </ligand>
</feature>
<feature type="binding site" evidence="1">
    <location>
        <position position="139"/>
    </location>
    <ligand>
        <name>carbamoyl phosphate</name>
        <dbReference type="ChEBI" id="CHEBI:58228"/>
    </ligand>
</feature>
<feature type="binding site" evidence="1">
    <location>
        <position position="142"/>
    </location>
    <ligand>
        <name>carbamoyl phosphate</name>
        <dbReference type="ChEBI" id="CHEBI:58228"/>
    </ligand>
</feature>
<feature type="binding site" evidence="1">
    <location>
        <position position="172"/>
    </location>
    <ligand>
        <name>L-aspartate</name>
        <dbReference type="ChEBI" id="CHEBI:29991"/>
    </ligand>
</feature>
<feature type="binding site" evidence="1">
    <location>
        <position position="224"/>
    </location>
    <ligand>
        <name>L-aspartate</name>
        <dbReference type="ChEBI" id="CHEBI:29991"/>
    </ligand>
</feature>
<feature type="binding site" evidence="1">
    <location>
        <position position="265"/>
    </location>
    <ligand>
        <name>carbamoyl phosphate</name>
        <dbReference type="ChEBI" id="CHEBI:58228"/>
    </ligand>
</feature>
<feature type="binding site" evidence="1">
    <location>
        <position position="266"/>
    </location>
    <ligand>
        <name>carbamoyl phosphate</name>
        <dbReference type="ChEBI" id="CHEBI:58228"/>
    </ligand>
</feature>
<comment type="function">
    <text evidence="1">Catalyzes the condensation of carbamoyl phosphate and aspartate to form carbamoyl aspartate and inorganic phosphate, the committed step in the de novo pyrimidine nucleotide biosynthesis pathway.</text>
</comment>
<comment type="catalytic activity">
    <reaction evidence="1">
        <text>carbamoyl phosphate + L-aspartate = N-carbamoyl-L-aspartate + phosphate + H(+)</text>
        <dbReference type="Rhea" id="RHEA:20013"/>
        <dbReference type="ChEBI" id="CHEBI:15378"/>
        <dbReference type="ChEBI" id="CHEBI:29991"/>
        <dbReference type="ChEBI" id="CHEBI:32814"/>
        <dbReference type="ChEBI" id="CHEBI:43474"/>
        <dbReference type="ChEBI" id="CHEBI:58228"/>
        <dbReference type="EC" id="2.1.3.2"/>
    </reaction>
</comment>
<comment type="pathway">
    <text evidence="1">Pyrimidine metabolism; UMP biosynthesis via de novo pathway; (S)-dihydroorotate from bicarbonate: step 2/3.</text>
</comment>
<comment type="subunit">
    <text evidence="1">Heterododecamer (2C3:3R2) of six catalytic PyrB chains organized as two trimers (C3), and six regulatory PyrI chains organized as three dimers (R2).</text>
</comment>
<comment type="similarity">
    <text evidence="1">Belongs to the aspartate/ornithine carbamoyltransferase superfamily. ATCase family.</text>
</comment>
<protein>
    <recommendedName>
        <fullName evidence="1">Aspartate carbamoyltransferase catalytic subunit</fullName>
        <ecNumber evidence="1">2.1.3.2</ecNumber>
    </recommendedName>
    <alternativeName>
        <fullName evidence="1">Aspartate transcarbamylase</fullName>
        <shortName evidence="1">ATCase</shortName>
    </alternativeName>
</protein>
<accession>Q03LU0</accession>
<keyword id="KW-0665">Pyrimidine biosynthesis</keyword>
<keyword id="KW-0808">Transferase</keyword>
<organism>
    <name type="scientific">Streptococcus thermophilus (strain ATCC BAA-491 / LMD-9)</name>
    <dbReference type="NCBI Taxonomy" id="322159"/>
    <lineage>
        <taxon>Bacteria</taxon>
        <taxon>Bacillati</taxon>
        <taxon>Bacillota</taxon>
        <taxon>Bacilli</taxon>
        <taxon>Lactobacillales</taxon>
        <taxon>Streptococcaceae</taxon>
        <taxon>Streptococcus</taxon>
    </lineage>
</organism>
<name>PYRB_STRTD</name>
<evidence type="ECO:0000255" key="1">
    <source>
        <dbReference type="HAMAP-Rule" id="MF_00001"/>
    </source>
</evidence>